<comment type="similarity">
    <text evidence="2">Belongs to the eukaryotic ribosomal protein eS17 family.</text>
</comment>
<sequence length="140" mass="16036">MGRVRTKTVKKSSRQVIEKYYSRMTLDFHTNKKILEEVAIIPSKRLRNKIAGFSTHLMKRIQKGPVRGISLKLQEEERERRMDFVPDESAIKIDDVKVDKETLEMLASLGMSDIAGISQVETQQAMAPAVFGRPAGRYQR</sequence>
<gene>
    <name type="primary">RPS17C</name>
    <name type="ordered locus">At3g10610</name>
    <name type="ORF">F13M14.10</name>
    <name type="ORF">F18K10.23</name>
</gene>
<evidence type="ECO:0000303" key="1">
    <source>
    </source>
</evidence>
<evidence type="ECO:0000305" key="2"/>
<dbReference type="EMBL" id="AC011560">
    <property type="protein sequence ID" value="AAG51372.1"/>
    <property type="molecule type" value="Genomic_DNA"/>
</dbReference>
<dbReference type="EMBL" id="AC013428">
    <property type="protein sequence ID" value="AAF76367.1"/>
    <property type="molecule type" value="Genomic_DNA"/>
</dbReference>
<dbReference type="EMBL" id="CP002686">
    <property type="protein sequence ID" value="AEE74934.1"/>
    <property type="molecule type" value="Genomic_DNA"/>
</dbReference>
<dbReference type="EMBL" id="AY063881">
    <property type="protein sequence ID" value="AAL36237.1"/>
    <property type="molecule type" value="mRNA"/>
</dbReference>
<dbReference type="EMBL" id="AY091313">
    <property type="protein sequence ID" value="AAM14252.1"/>
    <property type="molecule type" value="mRNA"/>
</dbReference>
<dbReference type="EMBL" id="AY088250">
    <property type="protein sequence ID" value="AAM65790.1"/>
    <property type="molecule type" value="mRNA"/>
</dbReference>
<dbReference type="RefSeq" id="NP_187672.1">
    <property type="nucleotide sequence ID" value="NM_111897.4"/>
</dbReference>
<dbReference type="SMR" id="Q9SQZ1"/>
<dbReference type="BioGRID" id="5564">
    <property type="interactions" value="45"/>
</dbReference>
<dbReference type="FunCoup" id="Q9SQZ1">
    <property type="interactions" value="3164"/>
</dbReference>
<dbReference type="STRING" id="3702.Q9SQZ1"/>
<dbReference type="PaxDb" id="3702-AT3G10610.1"/>
<dbReference type="ProteomicsDB" id="226865"/>
<dbReference type="EnsemblPlants" id="AT3G10610.1">
    <property type="protein sequence ID" value="AT3G10610.1"/>
    <property type="gene ID" value="AT3G10610"/>
</dbReference>
<dbReference type="GeneID" id="820230"/>
<dbReference type="Gramene" id="AT3G10610.1">
    <property type="protein sequence ID" value="AT3G10610.1"/>
    <property type="gene ID" value="AT3G10610"/>
</dbReference>
<dbReference type="KEGG" id="ath:AT3G10610"/>
<dbReference type="Araport" id="AT3G10610"/>
<dbReference type="TAIR" id="AT3G10610"/>
<dbReference type="eggNOG" id="KOG0187">
    <property type="taxonomic scope" value="Eukaryota"/>
</dbReference>
<dbReference type="HOGENOM" id="CLU_112958_2_0_1"/>
<dbReference type="InParanoid" id="Q9SQZ1"/>
<dbReference type="OMA" id="YYGRLTM"/>
<dbReference type="OrthoDB" id="1727351at2759"/>
<dbReference type="PhylomeDB" id="Q9SQZ1"/>
<dbReference type="PRO" id="PR:Q9SQZ1"/>
<dbReference type="Proteomes" id="UP000006548">
    <property type="component" value="Chromosome 3"/>
</dbReference>
<dbReference type="ExpressionAtlas" id="Q9SQZ1">
    <property type="expression patterns" value="baseline and differential"/>
</dbReference>
<dbReference type="GO" id="GO:0005829">
    <property type="term" value="C:cytosol"/>
    <property type="evidence" value="ECO:0007005"/>
    <property type="project" value="TAIR"/>
</dbReference>
<dbReference type="GO" id="GO:0022626">
    <property type="term" value="C:cytosolic ribosome"/>
    <property type="evidence" value="ECO:0007005"/>
    <property type="project" value="TAIR"/>
</dbReference>
<dbReference type="GO" id="GO:0022627">
    <property type="term" value="C:cytosolic small ribosomal subunit"/>
    <property type="evidence" value="ECO:0007005"/>
    <property type="project" value="TAIR"/>
</dbReference>
<dbReference type="GO" id="GO:0003729">
    <property type="term" value="F:mRNA binding"/>
    <property type="evidence" value="ECO:0000314"/>
    <property type="project" value="TAIR"/>
</dbReference>
<dbReference type="GO" id="GO:0003735">
    <property type="term" value="F:structural constituent of ribosome"/>
    <property type="evidence" value="ECO:0000314"/>
    <property type="project" value="CAFA"/>
</dbReference>
<dbReference type="GO" id="GO:0006412">
    <property type="term" value="P:translation"/>
    <property type="evidence" value="ECO:0007669"/>
    <property type="project" value="InterPro"/>
</dbReference>
<dbReference type="FunFam" id="1.10.60.20:FF:000001">
    <property type="entry name" value="40S ribosomal protein S17"/>
    <property type="match status" value="1"/>
</dbReference>
<dbReference type="Gene3D" id="1.10.60.20">
    <property type="entry name" value="Ribosomal protein S17e-like"/>
    <property type="match status" value="1"/>
</dbReference>
<dbReference type="HAMAP" id="MF_00511">
    <property type="entry name" value="Ribosomal_eS17"/>
    <property type="match status" value="1"/>
</dbReference>
<dbReference type="InterPro" id="IPR001210">
    <property type="entry name" value="Ribosomal_eS17"/>
</dbReference>
<dbReference type="InterPro" id="IPR018273">
    <property type="entry name" value="Ribosomal_eS17_CS"/>
</dbReference>
<dbReference type="InterPro" id="IPR036401">
    <property type="entry name" value="Ribosomal_eS17_sf"/>
</dbReference>
<dbReference type="PANTHER" id="PTHR10732">
    <property type="entry name" value="40S RIBOSOMAL PROTEIN S17"/>
    <property type="match status" value="1"/>
</dbReference>
<dbReference type="PANTHER" id="PTHR10732:SF7">
    <property type="entry name" value="SMALL RIBOSOMAL SUBUNIT PROTEIN ES17X-RELATED"/>
    <property type="match status" value="1"/>
</dbReference>
<dbReference type="Pfam" id="PF00833">
    <property type="entry name" value="Ribosomal_S17e"/>
    <property type="match status" value="1"/>
</dbReference>
<dbReference type="SUPFAM" id="SSF116820">
    <property type="entry name" value="Rps17e-like"/>
    <property type="match status" value="1"/>
</dbReference>
<dbReference type="PROSITE" id="PS00712">
    <property type="entry name" value="RIBOSOMAL_S17E"/>
    <property type="match status" value="1"/>
</dbReference>
<feature type="chain" id="PRO_0000141540" description="Small ribosomal subunit protein eS17x">
    <location>
        <begin position="1"/>
        <end position="140"/>
    </location>
</feature>
<proteinExistence type="evidence at transcript level"/>
<organism>
    <name type="scientific">Arabidopsis thaliana</name>
    <name type="common">Mouse-ear cress</name>
    <dbReference type="NCBI Taxonomy" id="3702"/>
    <lineage>
        <taxon>Eukaryota</taxon>
        <taxon>Viridiplantae</taxon>
        <taxon>Streptophyta</taxon>
        <taxon>Embryophyta</taxon>
        <taxon>Tracheophyta</taxon>
        <taxon>Spermatophyta</taxon>
        <taxon>Magnoliopsida</taxon>
        <taxon>eudicotyledons</taxon>
        <taxon>Gunneridae</taxon>
        <taxon>Pentapetalae</taxon>
        <taxon>rosids</taxon>
        <taxon>malvids</taxon>
        <taxon>Brassicales</taxon>
        <taxon>Brassicaceae</taxon>
        <taxon>Camelineae</taxon>
        <taxon>Arabidopsis</taxon>
    </lineage>
</organism>
<name>RS173_ARATH</name>
<protein>
    <recommendedName>
        <fullName evidence="1">Small ribosomal subunit protein eS17x</fullName>
    </recommendedName>
    <alternativeName>
        <fullName>40S ribosomal protein S17-3</fullName>
    </alternativeName>
</protein>
<keyword id="KW-1185">Reference proteome</keyword>
<keyword id="KW-0687">Ribonucleoprotein</keyword>
<keyword id="KW-0689">Ribosomal protein</keyword>
<accession>Q9SQZ1</accession>
<reference key="1">
    <citation type="journal article" date="2000" name="Nature">
        <title>Sequence and analysis of chromosome 3 of the plant Arabidopsis thaliana.</title>
        <authorList>
            <person name="Salanoubat M."/>
            <person name="Lemcke K."/>
            <person name="Rieger M."/>
            <person name="Ansorge W."/>
            <person name="Unseld M."/>
            <person name="Fartmann B."/>
            <person name="Valle G."/>
            <person name="Bloecker H."/>
            <person name="Perez-Alonso M."/>
            <person name="Obermaier B."/>
            <person name="Delseny M."/>
            <person name="Boutry M."/>
            <person name="Grivell L.A."/>
            <person name="Mache R."/>
            <person name="Puigdomenech P."/>
            <person name="De Simone V."/>
            <person name="Choisne N."/>
            <person name="Artiguenave F."/>
            <person name="Robert C."/>
            <person name="Brottier P."/>
            <person name="Wincker P."/>
            <person name="Cattolico L."/>
            <person name="Weissenbach J."/>
            <person name="Saurin W."/>
            <person name="Quetier F."/>
            <person name="Schaefer M."/>
            <person name="Mueller-Auer S."/>
            <person name="Gabel C."/>
            <person name="Fuchs M."/>
            <person name="Benes V."/>
            <person name="Wurmbach E."/>
            <person name="Drzonek H."/>
            <person name="Erfle H."/>
            <person name="Jordan N."/>
            <person name="Bangert S."/>
            <person name="Wiedelmann R."/>
            <person name="Kranz H."/>
            <person name="Voss H."/>
            <person name="Holland R."/>
            <person name="Brandt P."/>
            <person name="Nyakatura G."/>
            <person name="Vezzi A."/>
            <person name="D'Angelo M."/>
            <person name="Pallavicini A."/>
            <person name="Toppo S."/>
            <person name="Simionati B."/>
            <person name="Conrad A."/>
            <person name="Hornischer K."/>
            <person name="Kauer G."/>
            <person name="Loehnert T.-H."/>
            <person name="Nordsiek G."/>
            <person name="Reichelt J."/>
            <person name="Scharfe M."/>
            <person name="Schoen O."/>
            <person name="Bargues M."/>
            <person name="Terol J."/>
            <person name="Climent J."/>
            <person name="Navarro P."/>
            <person name="Collado C."/>
            <person name="Perez-Perez A."/>
            <person name="Ottenwaelder B."/>
            <person name="Duchemin D."/>
            <person name="Cooke R."/>
            <person name="Laudie M."/>
            <person name="Berger-Llauro C."/>
            <person name="Purnelle B."/>
            <person name="Masuy D."/>
            <person name="de Haan M."/>
            <person name="Maarse A.C."/>
            <person name="Alcaraz J.-P."/>
            <person name="Cottet A."/>
            <person name="Casacuberta E."/>
            <person name="Monfort A."/>
            <person name="Argiriou A."/>
            <person name="Flores M."/>
            <person name="Liguori R."/>
            <person name="Vitale D."/>
            <person name="Mannhaupt G."/>
            <person name="Haase D."/>
            <person name="Schoof H."/>
            <person name="Rudd S."/>
            <person name="Zaccaria P."/>
            <person name="Mewes H.-W."/>
            <person name="Mayer K.F.X."/>
            <person name="Kaul S."/>
            <person name="Town C.D."/>
            <person name="Koo H.L."/>
            <person name="Tallon L.J."/>
            <person name="Jenkins J."/>
            <person name="Rooney T."/>
            <person name="Rizzo M."/>
            <person name="Walts A."/>
            <person name="Utterback T."/>
            <person name="Fujii C.Y."/>
            <person name="Shea T.P."/>
            <person name="Creasy T.H."/>
            <person name="Haas B."/>
            <person name="Maiti R."/>
            <person name="Wu D."/>
            <person name="Peterson J."/>
            <person name="Van Aken S."/>
            <person name="Pai G."/>
            <person name="Militscher J."/>
            <person name="Sellers P."/>
            <person name="Gill J.E."/>
            <person name="Feldblyum T.V."/>
            <person name="Preuss D."/>
            <person name="Lin X."/>
            <person name="Nierman W.C."/>
            <person name="Salzberg S.L."/>
            <person name="White O."/>
            <person name="Venter J.C."/>
            <person name="Fraser C.M."/>
            <person name="Kaneko T."/>
            <person name="Nakamura Y."/>
            <person name="Sato S."/>
            <person name="Kato T."/>
            <person name="Asamizu E."/>
            <person name="Sasamoto S."/>
            <person name="Kimura T."/>
            <person name="Idesawa K."/>
            <person name="Kawashima K."/>
            <person name="Kishida Y."/>
            <person name="Kiyokawa C."/>
            <person name="Kohara M."/>
            <person name="Matsumoto M."/>
            <person name="Matsuno A."/>
            <person name="Muraki A."/>
            <person name="Nakayama S."/>
            <person name="Nakazaki N."/>
            <person name="Shinpo S."/>
            <person name="Takeuchi C."/>
            <person name="Wada T."/>
            <person name="Watanabe A."/>
            <person name="Yamada M."/>
            <person name="Yasuda M."/>
            <person name="Tabata S."/>
        </authorList>
    </citation>
    <scope>NUCLEOTIDE SEQUENCE [LARGE SCALE GENOMIC DNA]</scope>
    <source>
        <strain>cv. Columbia</strain>
    </source>
</reference>
<reference key="2">
    <citation type="journal article" date="2017" name="Plant J.">
        <title>Araport11: a complete reannotation of the Arabidopsis thaliana reference genome.</title>
        <authorList>
            <person name="Cheng C.Y."/>
            <person name="Krishnakumar V."/>
            <person name="Chan A.P."/>
            <person name="Thibaud-Nissen F."/>
            <person name="Schobel S."/>
            <person name="Town C.D."/>
        </authorList>
    </citation>
    <scope>GENOME REANNOTATION</scope>
    <source>
        <strain>cv. Columbia</strain>
    </source>
</reference>
<reference key="3">
    <citation type="journal article" date="2003" name="Science">
        <title>Empirical analysis of transcriptional activity in the Arabidopsis genome.</title>
        <authorList>
            <person name="Yamada K."/>
            <person name="Lim J."/>
            <person name="Dale J.M."/>
            <person name="Chen H."/>
            <person name="Shinn P."/>
            <person name="Palm C.J."/>
            <person name="Southwick A.M."/>
            <person name="Wu H.C."/>
            <person name="Kim C.J."/>
            <person name="Nguyen M."/>
            <person name="Pham P.K."/>
            <person name="Cheuk R.F."/>
            <person name="Karlin-Newmann G."/>
            <person name="Liu S.X."/>
            <person name="Lam B."/>
            <person name="Sakano H."/>
            <person name="Wu T."/>
            <person name="Yu G."/>
            <person name="Miranda M."/>
            <person name="Quach H.L."/>
            <person name="Tripp M."/>
            <person name="Chang C.H."/>
            <person name="Lee J.M."/>
            <person name="Toriumi M.J."/>
            <person name="Chan M.M."/>
            <person name="Tang C.C."/>
            <person name="Onodera C.S."/>
            <person name="Deng J.M."/>
            <person name="Akiyama K."/>
            <person name="Ansari Y."/>
            <person name="Arakawa T."/>
            <person name="Banh J."/>
            <person name="Banno F."/>
            <person name="Bowser L."/>
            <person name="Brooks S.Y."/>
            <person name="Carninci P."/>
            <person name="Chao Q."/>
            <person name="Choy N."/>
            <person name="Enju A."/>
            <person name="Goldsmith A.D."/>
            <person name="Gurjal M."/>
            <person name="Hansen N.F."/>
            <person name="Hayashizaki Y."/>
            <person name="Johnson-Hopson C."/>
            <person name="Hsuan V.W."/>
            <person name="Iida K."/>
            <person name="Karnes M."/>
            <person name="Khan S."/>
            <person name="Koesema E."/>
            <person name="Ishida J."/>
            <person name="Jiang P.X."/>
            <person name="Jones T."/>
            <person name="Kawai J."/>
            <person name="Kamiya A."/>
            <person name="Meyers C."/>
            <person name="Nakajima M."/>
            <person name="Narusaka M."/>
            <person name="Seki M."/>
            <person name="Sakurai T."/>
            <person name="Satou M."/>
            <person name="Tamse R."/>
            <person name="Vaysberg M."/>
            <person name="Wallender E.K."/>
            <person name="Wong C."/>
            <person name="Yamamura Y."/>
            <person name="Yuan S."/>
            <person name="Shinozaki K."/>
            <person name="Davis R.W."/>
            <person name="Theologis A."/>
            <person name="Ecker J.R."/>
        </authorList>
    </citation>
    <scope>NUCLEOTIDE SEQUENCE [LARGE SCALE MRNA]</scope>
    <source>
        <strain>cv. Columbia</strain>
    </source>
</reference>
<reference key="4">
    <citation type="submission" date="2002-03" db="EMBL/GenBank/DDBJ databases">
        <title>Full-length cDNA from Arabidopsis thaliana.</title>
        <authorList>
            <person name="Brover V.V."/>
            <person name="Troukhan M.E."/>
            <person name="Alexandrov N.A."/>
            <person name="Lu Y.-P."/>
            <person name="Flavell R.B."/>
            <person name="Feldmann K.A."/>
        </authorList>
    </citation>
    <scope>NUCLEOTIDE SEQUENCE [LARGE SCALE MRNA]</scope>
</reference>
<reference key="5">
    <citation type="journal article" date="2001" name="Plant Physiol.">
        <title>The organization of cytoplasmic ribosomal protein genes in the Arabidopsis genome.</title>
        <authorList>
            <person name="Barakat A."/>
            <person name="Szick-Miranda K."/>
            <person name="Chang I.-F."/>
            <person name="Guyot R."/>
            <person name="Blanc G."/>
            <person name="Cooke R."/>
            <person name="Delseny M."/>
            <person name="Bailey-Serres J."/>
        </authorList>
    </citation>
    <scope>GENE FAMILY ORGANIZATION</scope>
    <scope>NOMENCLATURE</scope>
</reference>
<reference key="6">
    <citation type="journal article" date="2023" name="Plant Cell">
        <title>An updated nomenclature for plant ribosomal protein genes.</title>
        <authorList>
            <person name="Scarpin M.R."/>
            <person name="Busche M."/>
            <person name="Martinez R.E."/>
            <person name="Harper L.C."/>
            <person name="Reiser L."/>
            <person name="Szakonyi D."/>
            <person name="Merchante C."/>
            <person name="Lan T."/>
            <person name="Xiong W."/>
            <person name="Mo B."/>
            <person name="Tang G."/>
            <person name="Chen X."/>
            <person name="Bailey-Serres J."/>
            <person name="Browning K.S."/>
            <person name="Brunkard J.O."/>
        </authorList>
    </citation>
    <scope>NOMENCLATURE</scope>
</reference>